<evidence type="ECO:0000250" key="1">
    <source>
        <dbReference type="UniProtKB" id="P03928"/>
    </source>
</evidence>
<evidence type="ECO:0000250" key="2">
    <source>
        <dbReference type="UniProtKB" id="P19483"/>
    </source>
</evidence>
<evidence type="ECO:0000255" key="3"/>
<evidence type="ECO:0000256" key="4">
    <source>
        <dbReference type="SAM" id="MobiDB-lite"/>
    </source>
</evidence>
<evidence type="ECO:0000305" key="5"/>
<sequence length="54" mass="6298">MPQLNPGPWFAILVFSWLIFLTIIPTKILSHISPNEPTPVSAEKHKTESWDWPW</sequence>
<name>ATP8_CYPCA</name>
<gene>
    <name evidence="1" type="primary">mt-atp8</name>
    <name type="synonym">atp8</name>
    <name type="synonym">atpase8</name>
    <name type="synonym">mtatp8</name>
</gene>
<protein>
    <recommendedName>
        <fullName evidence="1">ATP synthase F(0) complex subunit 8</fullName>
    </recommendedName>
    <alternativeName>
        <fullName>A6L</fullName>
    </alternativeName>
    <alternativeName>
        <fullName>F-ATPase subunit 8</fullName>
    </alternativeName>
</protein>
<dbReference type="EMBL" id="X61010">
    <property type="protein sequence ID" value="CAA43344.1"/>
    <property type="molecule type" value="Genomic_DNA"/>
</dbReference>
<dbReference type="PIR" id="S36013">
    <property type="entry name" value="S36013"/>
</dbReference>
<dbReference type="RefSeq" id="NP_007086.1">
    <property type="nucleotide sequence ID" value="NC_001606.1"/>
</dbReference>
<dbReference type="SMR" id="P24948"/>
<dbReference type="GeneID" id="807760"/>
<dbReference type="KEGG" id="ccar:807760"/>
<dbReference type="CTD" id="4509"/>
<dbReference type="OMA" id="MPQLNPN"/>
<dbReference type="OrthoDB" id="8734014at2759"/>
<dbReference type="Proteomes" id="UP000694384">
    <property type="component" value="Unplaced"/>
</dbReference>
<dbReference type="Proteomes" id="UP000694427">
    <property type="component" value="Unplaced"/>
</dbReference>
<dbReference type="Proteomes" id="UP000694700">
    <property type="component" value="Unplaced"/>
</dbReference>
<dbReference type="Proteomes" id="UP000694701">
    <property type="component" value="Unplaced"/>
</dbReference>
<dbReference type="Proteomes" id="UP001155660">
    <property type="component" value="Mitochondrion MT"/>
</dbReference>
<dbReference type="GO" id="GO:0031966">
    <property type="term" value="C:mitochondrial membrane"/>
    <property type="evidence" value="ECO:0007669"/>
    <property type="project" value="UniProtKB-SubCell"/>
</dbReference>
<dbReference type="GO" id="GO:0045259">
    <property type="term" value="C:proton-transporting ATP synthase complex"/>
    <property type="evidence" value="ECO:0007669"/>
    <property type="project" value="UniProtKB-KW"/>
</dbReference>
<dbReference type="GO" id="GO:0015078">
    <property type="term" value="F:proton transmembrane transporter activity"/>
    <property type="evidence" value="ECO:0007669"/>
    <property type="project" value="InterPro"/>
</dbReference>
<dbReference type="GO" id="GO:0015986">
    <property type="term" value="P:proton motive force-driven ATP synthesis"/>
    <property type="evidence" value="ECO:0007669"/>
    <property type="project" value="InterPro"/>
</dbReference>
<dbReference type="InterPro" id="IPR001421">
    <property type="entry name" value="ATP8_metazoa"/>
</dbReference>
<dbReference type="InterPro" id="IPR050635">
    <property type="entry name" value="ATPase_protein_8"/>
</dbReference>
<dbReference type="PANTHER" id="PTHR39937">
    <property type="entry name" value="ATP SYNTHASE PROTEIN 8"/>
    <property type="match status" value="1"/>
</dbReference>
<dbReference type="PANTHER" id="PTHR39937:SF1">
    <property type="entry name" value="ATP SYNTHASE PROTEIN 8"/>
    <property type="match status" value="1"/>
</dbReference>
<dbReference type="Pfam" id="PF00895">
    <property type="entry name" value="ATP-synt_8"/>
    <property type="match status" value="1"/>
</dbReference>
<reference key="1">
    <citation type="journal article" date="1994" name="J. Mol. Evol.">
        <title>The complete nucleotide sequence and gene organization of carp (Cyprinus carpio) mitochondrial genome.</title>
        <authorList>
            <person name="Chang Y.S."/>
            <person name="Huang F.L."/>
            <person name="Lo T.B."/>
        </authorList>
    </citation>
    <scope>NUCLEOTIDE SEQUENCE [GENOMIC DNA]</scope>
</reference>
<comment type="function">
    <text evidence="1 2">Subunit 8, of the mitochondrial membrane ATP synthase complex (F(1)F(0) ATP synthase or Complex V) that produces ATP from ADP in the presence of a proton gradient across the membrane which is generated by electron transport complexes of the respiratory chain. ATP synthase complex consist of a soluble F(1) head domain - the catalytic core - and a membrane F(1) domain - the membrane proton channel. These two domains are linked by a central stalk rotating inside the F(1) region and a stationary peripheral stalk. During catalysis, ATP synthesis in the catalytic domain of F(1) is coupled via a rotary mechanism of the central stalk subunits to proton translocation (By similarity). In vivo, can only synthesize ATP although its ATP hydrolase activity can be activated artificially in vitro (By similarity). Part of the complex F(0) domain (By similarity).</text>
</comment>
<comment type="subunit">
    <text evidence="1">Component of the ATP synthase complex composed at least of ATP5F1A/subunit alpha, ATP5F1B/subunit beta, ATP5MC1/subunit c (homooctomer), MT-ATP6/subunit a, MT-ATP8/subunit 8, ATP5ME/subunit e, ATP5MF/subunit f, ATP5MG/subunit g, ATP5MK/subunit k, ATP5MJ/subunit j, ATP5F1C/subunit gamma, ATP5F1D/subunit delta, ATP5F1E/subunit epsilon, ATP5PF/subunit F6, ATP5PB/subunit b, ATP5PD/subunit d, ATP5PO/subunit OSCP. ATP synthase complex consists of a soluble F(1) head domain (subunits alpha(3) and beta(3)) - the catalytic core - and a membrane F(0) domain - the membrane proton channel (subunits c, a, 8, e, f, g, k and j). These two domains are linked by a central stalk (subunits gamma, delta, and epsilon) rotating inside the F1 region and a stationary peripheral stalk (subunits F6, b, d, and OSCP).</text>
</comment>
<comment type="subcellular location">
    <subcellularLocation>
        <location>Mitochondrion membrane</location>
        <topology>Single-pass membrane protein</topology>
    </subcellularLocation>
</comment>
<comment type="similarity">
    <text evidence="5">Belongs to the ATPase protein 8 family.</text>
</comment>
<organism>
    <name type="scientific">Cyprinus carpio</name>
    <name type="common">Common carp</name>
    <dbReference type="NCBI Taxonomy" id="7962"/>
    <lineage>
        <taxon>Eukaryota</taxon>
        <taxon>Metazoa</taxon>
        <taxon>Chordata</taxon>
        <taxon>Craniata</taxon>
        <taxon>Vertebrata</taxon>
        <taxon>Euteleostomi</taxon>
        <taxon>Actinopterygii</taxon>
        <taxon>Neopterygii</taxon>
        <taxon>Teleostei</taxon>
        <taxon>Ostariophysi</taxon>
        <taxon>Cypriniformes</taxon>
        <taxon>Cyprinidae</taxon>
        <taxon>Cyprininae</taxon>
        <taxon>Cyprinus</taxon>
    </lineage>
</organism>
<feature type="chain" id="PRO_0000195517" description="ATP synthase F(0) complex subunit 8">
    <location>
        <begin position="1"/>
        <end position="54"/>
    </location>
</feature>
<feature type="transmembrane region" description="Helical" evidence="3">
    <location>
        <begin position="4"/>
        <end position="24"/>
    </location>
</feature>
<feature type="region of interest" description="Disordered" evidence="4">
    <location>
        <begin position="35"/>
        <end position="54"/>
    </location>
</feature>
<feature type="compositionally biased region" description="Basic and acidic residues" evidence="4">
    <location>
        <begin position="42"/>
        <end position="54"/>
    </location>
</feature>
<accession>P24948</accession>
<keyword id="KW-0066">ATP synthesis</keyword>
<keyword id="KW-0138">CF(0)</keyword>
<keyword id="KW-0375">Hydrogen ion transport</keyword>
<keyword id="KW-0406">Ion transport</keyword>
<keyword id="KW-0472">Membrane</keyword>
<keyword id="KW-0496">Mitochondrion</keyword>
<keyword id="KW-1185">Reference proteome</keyword>
<keyword id="KW-0812">Transmembrane</keyword>
<keyword id="KW-1133">Transmembrane helix</keyword>
<keyword id="KW-0813">Transport</keyword>
<geneLocation type="mitochondrion"/>
<proteinExistence type="inferred from homology"/>